<evidence type="ECO:0000250" key="1"/>
<evidence type="ECO:0000250" key="2">
    <source>
        <dbReference type="UniProtKB" id="Q8VHI5"/>
    </source>
</evidence>
<evidence type="ECO:0000255" key="3"/>
<evidence type="ECO:0000255" key="4">
    <source>
        <dbReference type="PROSITE-ProRule" id="PRU00123"/>
    </source>
</evidence>
<evidence type="ECO:0000255" key="5">
    <source>
        <dbReference type="PROSITE-ProRule" id="PRU00219"/>
    </source>
</evidence>
<evidence type="ECO:0000256" key="6">
    <source>
        <dbReference type="SAM" id="MobiDB-lite"/>
    </source>
</evidence>
<evidence type="ECO:0000269" key="7">
    <source>
    </source>
</evidence>
<evidence type="ECO:0000303" key="8">
    <source>
    </source>
</evidence>
<evidence type="ECO:0000303" key="9">
    <source>
    </source>
</evidence>
<evidence type="ECO:0000303" key="10">
    <source>
    </source>
</evidence>
<evidence type="ECO:0000305" key="11"/>
<dbReference type="EMBL" id="AF063833">
    <property type="protein sequence ID" value="AAL18263.1"/>
    <property type="molecule type" value="mRNA"/>
</dbReference>
<dbReference type="EMBL" id="AY358338">
    <property type="protein sequence ID" value="AAQ88704.1"/>
    <property type="molecule type" value="mRNA"/>
</dbReference>
<dbReference type="EMBL" id="AK056772">
    <property type="protein sequence ID" value="BAB71279.1"/>
    <property type="molecule type" value="mRNA"/>
</dbReference>
<dbReference type="EMBL" id="AK292149">
    <property type="protein sequence ID" value="BAF84838.1"/>
    <property type="molecule type" value="mRNA"/>
</dbReference>
<dbReference type="EMBL" id="AC007363">
    <property type="protein sequence ID" value="AAF19243.2"/>
    <property type="molecule type" value="Genomic_DNA"/>
</dbReference>
<dbReference type="EMBL" id="CH471053">
    <property type="protein sequence ID" value="EAX00416.1"/>
    <property type="molecule type" value="Genomic_DNA"/>
</dbReference>
<dbReference type="EMBL" id="BC061519">
    <property type="protein sequence ID" value="AAH61519.1"/>
    <property type="molecule type" value="mRNA"/>
</dbReference>
<dbReference type="EMBL" id="BC128260">
    <property type="protein sequence ID" value="AAI28261.1"/>
    <property type="molecule type" value="mRNA"/>
</dbReference>
<dbReference type="CCDS" id="CCDS33180.1">
    <molecule id="Q6UXI7-4"/>
</dbReference>
<dbReference type="CCDS" id="CCDS54347.1">
    <molecule id="Q6UXI7-1"/>
</dbReference>
<dbReference type="CCDS" id="CCDS54348.1">
    <molecule id="Q6UXI7-5"/>
</dbReference>
<dbReference type="CCDS" id="CCDS54349.1">
    <molecule id="Q6UXI7-2"/>
</dbReference>
<dbReference type="CCDS" id="CCDS54350.1">
    <molecule id="Q6UXI7-3"/>
</dbReference>
<dbReference type="RefSeq" id="NP_001171440.1">
    <molecule id="Q6UXI7-1"/>
    <property type="nucleotide sequence ID" value="NM_001177969.2"/>
</dbReference>
<dbReference type="RefSeq" id="NP_001171441.1">
    <molecule id="Q6UXI7-5"/>
    <property type="nucleotide sequence ID" value="NM_001177970.2"/>
</dbReference>
<dbReference type="RefSeq" id="NP_001171442.1">
    <molecule id="Q6UXI7-2"/>
    <property type="nucleotide sequence ID" value="NM_001177971.2"/>
</dbReference>
<dbReference type="RefSeq" id="NP_001171443.1">
    <molecule id="Q6UXI7-3"/>
    <property type="nucleotide sequence ID" value="NM_001177972.3"/>
</dbReference>
<dbReference type="RefSeq" id="NP_444506.2">
    <molecule id="Q6UXI7-4"/>
    <property type="nucleotide sequence ID" value="NM_053276.3"/>
</dbReference>
<dbReference type="SMR" id="Q6UXI7"/>
<dbReference type="BioGRID" id="111233">
    <property type="interactions" value="3"/>
</dbReference>
<dbReference type="FunCoup" id="Q6UXI7">
    <property type="interactions" value="17"/>
</dbReference>
<dbReference type="IntAct" id="Q6UXI7">
    <property type="interactions" value="2"/>
</dbReference>
<dbReference type="STRING" id="9606.ENSP00000368544"/>
<dbReference type="GlyCosmos" id="Q6UXI7">
    <property type="glycosylation" value="3 sites, 1 glycan"/>
</dbReference>
<dbReference type="GlyGen" id="Q6UXI7">
    <property type="glycosylation" value="3 sites, 1 N-linked glycan (1 site), 1 O-linked glycan (1 site)"/>
</dbReference>
<dbReference type="iPTMnet" id="Q6UXI7"/>
<dbReference type="PhosphoSitePlus" id="Q6UXI7"/>
<dbReference type="BioMuta" id="VIT"/>
<dbReference type="DMDM" id="74739159"/>
<dbReference type="jPOST" id="Q6UXI7"/>
<dbReference type="MassIVE" id="Q6UXI7"/>
<dbReference type="PaxDb" id="9606-ENSP00000368544"/>
<dbReference type="PeptideAtlas" id="Q6UXI7"/>
<dbReference type="ProteomicsDB" id="20025"/>
<dbReference type="ProteomicsDB" id="67627">
    <molecule id="Q6UXI7-1"/>
</dbReference>
<dbReference type="ProteomicsDB" id="67628">
    <molecule id="Q6UXI7-2"/>
</dbReference>
<dbReference type="ProteomicsDB" id="67629">
    <molecule id="Q6UXI7-3"/>
</dbReference>
<dbReference type="ProteomicsDB" id="67630">
    <molecule id="Q6UXI7-4"/>
</dbReference>
<dbReference type="Antibodypedia" id="29304">
    <property type="antibodies" value="56 antibodies from 14 providers"/>
</dbReference>
<dbReference type="DNASU" id="5212"/>
<dbReference type="Ensembl" id="ENST00000379241.7">
    <molecule id="Q6UXI7-2"/>
    <property type="protein sequence ID" value="ENSP00000368543.3"/>
    <property type="gene ID" value="ENSG00000205221.13"/>
</dbReference>
<dbReference type="Ensembl" id="ENST00000379242.8">
    <molecule id="Q6UXI7-4"/>
    <property type="protein sequence ID" value="ENSP00000368544.3"/>
    <property type="gene ID" value="ENSG00000205221.13"/>
</dbReference>
<dbReference type="Ensembl" id="ENST00000389975.7">
    <molecule id="Q6UXI7-1"/>
    <property type="protein sequence ID" value="ENSP00000374625.3"/>
    <property type="gene ID" value="ENSG00000205221.13"/>
</dbReference>
<dbReference type="Ensembl" id="ENST00000401530.5">
    <molecule id="Q6UXI7-5"/>
    <property type="protein sequence ID" value="ENSP00000385658.1"/>
    <property type="gene ID" value="ENSG00000205221.13"/>
</dbReference>
<dbReference type="Ensembl" id="ENST00000457137.6">
    <molecule id="Q6UXI7-3"/>
    <property type="protein sequence ID" value="ENSP00000393561.2"/>
    <property type="gene ID" value="ENSG00000205221.13"/>
</dbReference>
<dbReference type="GeneID" id="5212"/>
<dbReference type="KEGG" id="hsa:5212"/>
<dbReference type="MANE-Select" id="ENST00000379242.8">
    <molecule id="Q6UXI7-4"/>
    <property type="protein sequence ID" value="ENSP00000368544.3"/>
    <property type="RefSeq nucleotide sequence ID" value="NM_053276.4"/>
    <property type="RefSeq protein sequence ID" value="NP_444506.2"/>
</dbReference>
<dbReference type="UCSC" id="uc002rpk.4">
    <molecule id="Q6UXI7-1"/>
    <property type="organism name" value="human"/>
</dbReference>
<dbReference type="AGR" id="HGNC:12697"/>
<dbReference type="CTD" id="5212"/>
<dbReference type="DisGeNET" id="5212"/>
<dbReference type="GeneCards" id="VIT"/>
<dbReference type="HGNC" id="HGNC:12697">
    <property type="gene designation" value="VIT"/>
</dbReference>
<dbReference type="HPA" id="ENSG00000205221">
    <property type="expression patterns" value="Tissue enhanced (adipose tissue, ovary, tongue)"/>
</dbReference>
<dbReference type="MIM" id="617693">
    <property type="type" value="gene"/>
</dbReference>
<dbReference type="neXtProt" id="NX_Q6UXI7"/>
<dbReference type="OpenTargets" id="ENSG00000205221"/>
<dbReference type="PharmGKB" id="PA37316"/>
<dbReference type="VEuPathDB" id="HostDB:ENSG00000205221"/>
<dbReference type="eggNOG" id="KOG1216">
    <property type="taxonomic scope" value="Eukaryota"/>
</dbReference>
<dbReference type="GeneTree" id="ENSGT00940000159330"/>
<dbReference type="HOGENOM" id="CLU_116785_0_0_1"/>
<dbReference type="InParanoid" id="Q6UXI7"/>
<dbReference type="OMA" id="VMEPNFA"/>
<dbReference type="OrthoDB" id="441660at2759"/>
<dbReference type="PAN-GO" id="Q6UXI7">
    <property type="GO annotations" value="3 GO annotations based on evolutionary models"/>
</dbReference>
<dbReference type="PhylomeDB" id="Q6UXI7"/>
<dbReference type="TreeFam" id="TF318242"/>
<dbReference type="PathwayCommons" id="Q6UXI7"/>
<dbReference type="SignaLink" id="Q6UXI7"/>
<dbReference type="BioGRID-ORCS" id="5212">
    <property type="hits" value="7 hits in 1139 CRISPR screens"/>
</dbReference>
<dbReference type="ChiTaRS" id="VIT">
    <property type="organism name" value="human"/>
</dbReference>
<dbReference type="GenomeRNAi" id="5212"/>
<dbReference type="Pharos" id="Q6UXI7">
    <property type="development level" value="Tbio"/>
</dbReference>
<dbReference type="PRO" id="PR:Q6UXI7"/>
<dbReference type="Proteomes" id="UP000005640">
    <property type="component" value="Chromosome 2"/>
</dbReference>
<dbReference type="RNAct" id="Q6UXI7">
    <property type="molecule type" value="protein"/>
</dbReference>
<dbReference type="Bgee" id="ENSG00000205221">
    <property type="expression patterns" value="Expressed in tibia and 129 other cell types or tissues"/>
</dbReference>
<dbReference type="ExpressionAtlas" id="Q6UXI7">
    <property type="expression patterns" value="baseline and differential"/>
</dbReference>
<dbReference type="GO" id="GO:0005576">
    <property type="term" value="C:extracellular region"/>
    <property type="evidence" value="ECO:0007669"/>
    <property type="project" value="UniProtKB-KW"/>
</dbReference>
<dbReference type="GO" id="GO:0005614">
    <property type="term" value="C:interstitial matrix"/>
    <property type="evidence" value="ECO:0000318"/>
    <property type="project" value="GO_Central"/>
</dbReference>
<dbReference type="GO" id="GO:0005539">
    <property type="term" value="F:glycosaminoglycan binding"/>
    <property type="evidence" value="ECO:0007669"/>
    <property type="project" value="Ensembl"/>
</dbReference>
<dbReference type="GO" id="GO:0030198">
    <property type="term" value="P:extracellular matrix organization"/>
    <property type="evidence" value="ECO:0000318"/>
    <property type="project" value="GO_Central"/>
</dbReference>
<dbReference type="GO" id="GO:0010811">
    <property type="term" value="P:positive regulation of cell-substrate adhesion"/>
    <property type="evidence" value="ECO:0000318"/>
    <property type="project" value="GO_Central"/>
</dbReference>
<dbReference type="GO" id="GO:0021510">
    <property type="term" value="P:spinal cord development"/>
    <property type="evidence" value="ECO:0000250"/>
    <property type="project" value="UniProtKB"/>
</dbReference>
<dbReference type="CDD" id="cd01472">
    <property type="entry name" value="vWA_collagen"/>
    <property type="match status" value="1"/>
</dbReference>
<dbReference type="FunFam" id="2.170.130.20:FF:000001">
    <property type="entry name" value="Cysteine-rich secretory protein LCCL domain-containing 1"/>
    <property type="match status" value="1"/>
</dbReference>
<dbReference type="FunFam" id="3.40.50.410:FF:000009">
    <property type="entry name" value="Putative vitrin"/>
    <property type="match status" value="1"/>
</dbReference>
<dbReference type="FunFam" id="3.40.50.410:FF:000025">
    <property type="entry name" value="Vitrin"/>
    <property type="match status" value="1"/>
</dbReference>
<dbReference type="Gene3D" id="2.170.130.20">
    <property type="entry name" value="LCCL-like domain"/>
    <property type="match status" value="1"/>
</dbReference>
<dbReference type="Gene3D" id="3.40.50.410">
    <property type="entry name" value="von Willebrand factor, type A domain"/>
    <property type="match status" value="2"/>
</dbReference>
<dbReference type="InterPro" id="IPR050525">
    <property type="entry name" value="ECM_Assembly_Org"/>
</dbReference>
<dbReference type="InterPro" id="IPR004043">
    <property type="entry name" value="LCCL"/>
</dbReference>
<dbReference type="InterPro" id="IPR036609">
    <property type="entry name" value="LCCL_sf"/>
</dbReference>
<dbReference type="InterPro" id="IPR002035">
    <property type="entry name" value="VWF_A"/>
</dbReference>
<dbReference type="InterPro" id="IPR036465">
    <property type="entry name" value="vWFA_dom_sf"/>
</dbReference>
<dbReference type="PANTHER" id="PTHR24020">
    <property type="entry name" value="COLLAGEN ALPHA"/>
    <property type="match status" value="1"/>
</dbReference>
<dbReference type="PANTHER" id="PTHR24020:SF23">
    <property type="entry name" value="VITRIN"/>
    <property type="match status" value="1"/>
</dbReference>
<dbReference type="Pfam" id="PF03815">
    <property type="entry name" value="LCCL"/>
    <property type="match status" value="1"/>
</dbReference>
<dbReference type="Pfam" id="PF00092">
    <property type="entry name" value="VWA"/>
    <property type="match status" value="2"/>
</dbReference>
<dbReference type="PRINTS" id="PR00453">
    <property type="entry name" value="VWFADOMAIN"/>
</dbReference>
<dbReference type="SMART" id="SM00603">
    <property type="entry name" value="LCCL"/>
    <property type="match status" value="1"/>
</dbReference>
<dbReference type="SMART" id="SM00327">
    <property type="entry name" value="VWA"/>
    <property type="match status" value="2"/>
</dbReference>
<dbReference type="SUPFAM" id="SSF69848">
    <property type="entry name" value="LCCL domain"/>
    <property type="match status" value="1"/>
</dbReference>
<dbReference type="SUPFAM" id="SSF53300">
    <property type="entry name" value="vWA-like"/>
    <property type="match status" value="2"/>
</dbReference>
<dbReference type="PROSITE" id="PS50820">
    <property type="entry name" value="LCCL"/>
    <property type="match status" value="1"/>
</dbReference>
<dbReference type="PROSITE" id="PS50234">
    <property type="entry name" value="VWFA"/>
    <property type="match status" value="2"/>
</dbReference>
<keyword id="KW-0025">Alternative splicing</keyword>
<keyword id="KW-1015">Disulfide bond</keyword>
<keyword id="KW-0272">Extracellular matrix</keyword>
<keyword id="KW-0325">Glycoprotein</keyword>
<keyword id="KW-0524">Neurogenesis</keyword>
<keyword id="KW-1267">Proteomics identification</keyword>
<keyword id="KW-1185">Reference proteome</keyword>
<keyword id="KW-0677">Repeat</keyword>
<keyword id="KW-0964">Secreted</keyword>
<keyword id="KW-0732">Signal</keyword>
<reference key="1">
    <citation type="journal article" date="1999" name="Biochem. Soc. Trans.">
        <title>VIT-1: the second member of a new branch of the von Willebrand factor A domain superfamily.</title>
        <authorList>
            <person name="Mayne R."/>
            <person name="Ren Z.-X."/>
            <person name="Liu J.G."/>
            <person name="Cook T."/>
            <person name="Carson M."/>
            <person name="Narayana S."/>
        </authorList>
    </citation>
    <scope>NUCLEOTIDE SEQUENCE [MRNA] (ISOFORM 1)</scope>
    <source>
        <tissue>Skeletal muscle</tissue>
    </source>
</reference>
<reference key="2">
    <citation type="journal article" date="2003" name="Genome Res.">
        <title>The secreted protein discovery initiative (SPDI), a large-scale effort to identify novel human secreted and transmembrane proteins: a bioinformatics assessment.</title>
        <authorList>
            <person name="Clark H.F."/>
            <person name="Gurney A.L."/>
            <person name="Abaya E."/>
            <person name="Baker K."/>
            <person name="Baldwin D.T."/>
            <person name="Brush J."/>
            <person name="Chen J."/>
            <person name="Chow B."/>
            <person name="Chui C."/>
            <person name="Crowley C."/>
            <person name="Currell B."/>
            <person name="Deuel B."/>
            <person name="Dowd P."/>
            <person name="Eaton D."/>
            <person name="Foster J.S."/>
            <person name="Grimaldi C."/>
            <person name="Gu Q."/>
            <person name="Hass P.E."/>
            <person name="Heldens S."/>
            <person name="Huang A."/>
            <person name="Kim H.S."/>
            <person name="Klimowski L."/>
            <person name="Jin Y."/>
            <person name="Johnson S."/>
            <person name="Lee J."/>
            <person name="Lewis L."/>
            <person name="Liao D."/>
            <person name="Mark M.R."/>
            <person name="Robbie E."/>
            <person name="Sanchez C."/>
            <person name="Schoenfeld J."/>
            <person name="Seshagiri S."/>
            <person name="Simmons L."/>
            <person name="Singh J."/>
            <person name="Smith V."/>
            <person name="Stinson J."/>
            <person name="Vagts A."/>
            <person name="Vandlen R.L."/>
            <person name="Watanabe C."/>
            <person name="Wieand D."/>
            <person name="Woods K."/>
            <person name="Xie M.-H."/>
            <person name="Yansura D.G."/>
            <person name="Yi S."/>
            <person name="Yu G."/>
            <person name="Yuan J."/>
            <person name="Zhang M."/>
            <person name="Zhang Z."/>
            <person name="Goddard A.D."/>
            <person name="Wood W.I."/>
            <person name="Godowski P.J."/>
            <person name="Gray A.M."/>
        </authorList>
    </citation>
    <scope>NUCLEOTIDE SEQUENCE [LARGE SCALE MRNA] (ISOFORM 2)</scope>
</reference>
<reference key="3">
    <citation type="journal article" date="2004" name="Nat. Genet.">
        <title>Complete sequencing and characterization of 21,243 full-length human cDNAs.</title>
        <authorList>
            <person name="Ota T."/>
            <person name="Suzuki Y."/>
            <person name="Nishikawa T."/>
            <person name="Otsuki T."/>
            <person name="Sugiyama T."/>
            <person name="Irie R."/>
            <person name="Wakamatsu A."/>
            <person name="Hayashi K."/>
            <person name="Sato H."/>
            <person name="Nagai K."/>
            <person name="Kimura K."/>
            <person name="Makita H."/>
            <person name="Sekine M."/>
            <person name="Obayashi M."/>
            <person name="Nishi T."/>
            <person name="Shibahara T."/>
            <person name="Tanaka T."/>
            <person name="Ishii S."/>
            <person name="Yamamoto J."/>
            <person name="Saito K."/>
            <person name="Kawai Y."/>
            <person name="Isono Y."/>
            <person name="Nakamura Y."/>
            <person name="Nagahari K."/>
            <person name="Murakami K."/>
            <person name="Yasuda T."/>
            <person name="Iwayanagi T."/>
            <person name="Wagatsuma M."/>
            <person name="Shiratori A."/>
            <person name="Sudo H."/>
            <person name="Hosoiri T."/>
            <person name="Kaku Y."/>
            <person name="Kodaira H."/>
            <person name="Kondo H."/>
            <person name="Sugawara M."/>
            <person name="Takahashi M."/>
            <person name="Kanda K."/>
            <person name="Yokoi T."/>
            <person name="Furuya T."/>
            <person name="Kikkawa E."/>
            <person name="Omura Y."/>
            <person name="Abe K."/>
            <person name="Kamihara K."/>
            <person name="Katsuta N."/>
            <person name="Sato K."/>
            <person name="Tanikawa M."/>
            <person name="Yamazaki M."/>
            <person name="Ninomiya K."/>
            <person name="Ishibashi T."/>
            <person name="Yamashita H."/>
            <person name="Murakawa K."/>
            <person name="Fujimori K."/>
            <person name="Tanai H."/>
            <person name="Kimata M."/>
            <person name="Watanabe M."/>
            <person name="Hiraoka S."/>
            <person name="Chiba Y."/>
            <person name="Ishida S."/>
            <person name="Ono Y."/>
            <person name="Takiguchi S."/>
            <person name="Watanabe S."/>
            <person name="Yosida M."/>
            <person name="Hotuta T."/>
            <person name="Kusano J."/>
            <person name="Kanehori K."/>
            <person name="Takahashi-Fujii A."/>
            <person name="Hara H."/>
            <person name="Tanase T.-O."/>
            <person name="Nomura Y."/>
            <person name="Togiya S."/>
            <person name="Komai F."/>
            <person name="Hara R."/>
            <person name="Takeuchi K."/>
            <person name="Arita M."/>
            <person name="Imose N."/>
            <person name="Musashino K."/>
            <person name="Yuuki H."/>
            <person name="Oshima A."/>
            <person name="Sasaki N."/>
            <person name="Aotsuka S."/>
            <person name="Yoshikawa Y."/>
            <person name="Matsunawa H."/>
            <person name="Ichihara T."/>
            <person name="Shiohata N."/>
            <person name="Sano S."/>
            <person name="Moriya S."/>
            <person name="Momiyama H."/>
            <person name="Satoh N."/>
            <person name="Takami S."/>
            <person name="Terashima Y."/>
            <person name="Suzuki O."/>
            <person name="Nakagawa S."/>
            <person name="Senoh A."/>
            <person name="Mizoguchi H."/>
            <person name="Goto Y."/>
            <person name="Shimizu F."/>
            <person name="Wakebe H."/>
            <person name="Hishigaki H."/>
            <person name="Watanabe T."/>
            <person name="Sugiyama A."/>
            <person name="Takemoto M."/>
            <person name="Kawakami B."/>
            <person name="Yamazaki M."/>
            <person name="Watanabe K."/>
            <person name="Kumagai A."/>
            <person name="Itakura S."/>
            <person name="Fukuzumi Y."/>
            <person name="Fujimori Y."/>
            <person name="Komiyama M."/>
            <person name="Tashiro H."/>
            <person name="Tanigami A."/>
            <person name="Fujiwara T."/>
            <person name="Ono T."/>
            <person name="Yamada K."/>
            <person name="Fujii Y."/>
            <person name="Ozaki K."/>
            <person name="Hirao M."/>
            <person name="Ohmori Y."/>
            <person name="Kawabata A."/>
            <person name="Hikiji T."/>
            <person name="Kobatake N."/>
            <person name="Inagaki H."/>
            <person name="Ikema Y."/>
            <person name="Okamoto S."/>
            <person name="Okitani R."/>
            <person name="Kawakami T."/>
            <person name="Noguchi S."/>
            <person name="Itoh T."/>
            <person name="Shigeta K."/>
            <person name="Senba T."/>
            <person name="Matsumura K."/>
            <person name="Nakajima Y."/>
            <person name="Mizuno T."/>
            <person name="Morinaga M."/>
            <person name="Sasaki M."/>
            <person name="Togashi T."/>
            <person name="Oyama M."/>
            <person name="Hata H."/>
            <person name="Watanabe M."/>
            <person name="Komatsu T."/>
            <person name="Mizushima-Sugano J."/>
            <person name="Satoh T."/>
            <person name="Shirai Y."/>
            <person name="Takahashi Y."/>
            <person name="Nakagawa K."/>
            <person name="Okumura K."/>
            <person name="Nagase T."/>
            <person name="Nomura N."/>
            <person name="Kikuchi H."/>
            <person name="Masuho Y."/>
            <person name="Yamashita R."/>
            <person name="Nakai K."/>
            <person name="Yada T."/>
            <person name="Nakamura Y."/>
            <person name="Ohara O."/>
            <person name="Isogai T."/>
            <person name="Sugano S."/>
        </authorList>
    </citation>
    <scope>NUCLEOTIDE SEQUENCE [LARGE SCALE MRNA] (ISOFORMS 3 AND 4)</scope>
    <source>
        <tissue>Placenta</tissue>
        <tissue>Synovium</tissue>
    </source>
</reference>
<reference key="4">
    <citation type="journal article" date="2005" name="Nature">
        <title>Generation and annotation of the DNA sequences of human chromosomes 2 and 4.</title>
        <authorList>
            <person name="Hillier L.W."/>
            <person name="Graves T.A."/>
            <person name="Fulton R.S."/>
            <person name="Fulton L.A."/>
            <person name="Pepin K.H."/>
            <person name="Minx P."/>
            <person name="Wagner-McPherson C."/>
            <person name="Layman D."/>
            <person name="Wylie K."/>
            <person name="Sekhon M."/>
            <person name="Becker M.C."/>
            <person name="Fewell G.A."/>
            <person name="Delehaunty K.D."/>
            <person name="Miner T.L."/>
            <person name="Nash W.E."/>
            <person name="Kremitzki C."/>
            <person name="Oddy L."/>
            <person name="Du H."/>
            <person name="Sun H."/>
            <person name="Bradshaw-Cordum H."/>
            <person name="Ali J."/>
            <person name="Carter J."/>
            <person name="Cordes M."/>
            <person name="Harris A."/>
            <person name="Isak A."/>
            <person name="van Brunt A."/>
            <person name="Nguyen C."/>
            <person name="Du F."/>
            <person name="Courtney L."/>
            <person name="Kalicki J."/>
            <person name="Ozersky P."/>
            <person name="Abbott S."/>
            <person name="Armstrong J."/>
            <person name="Belter E.A."/>
            <person name="Caruso L."/>
            <person name="Cedroni M."/>
            <person name="Cotton M."/>
            <person name="Davidson T."/>
            <person name="Desai A."/>
            <person name="Elliott G."/>
            <person name="Erb T."/>
            <person name="Fronick C."/>
            <person name="Gaige T."/>
            <person name="Haakenson W."/>
            <person name="Haglund K."/>
            <person name="Holmes A."/>
            <person name="Harkins R."/>
            <person name="Kim K."/>
            <person name="Kruchowski S.S."/>
            <person name="Strong C.M."/>
            <person name="Grewal N."/>
            <person name="Goyea E."/>
            <person name="Hou S."/>
            <person name="Levy A."/>
            <person name="Martinka S."/>
            <person name="Mead K."/>
            <person name="McLellan M.D."/>
            <person name="Meyer R."/>
            <person name="Randall-Maher J."/>
            <person name="Tomlinson C."/>
            <person name="Dauphin-Kohlberg S."/>
            <person name="Kozlowicz-Reilly A."/>
            <person name="Shah N."/>
            <person name="Swearengen-Shahid S."/>
            <person name="Snider J."/>
            <person name="Strong J.T."/>
            <person name="Thompson J."/>
            <person name="Yoakum M."/>
            <person name="Leonard S."/>
            <person name="Pearman C."/>
            <person name="Trani L."/>
            <person name="Radionenko M."/>
            <person name="Waligorski J.E."/>
            <person name="Wang C."/>
            <person name="Rock S.M."/>
            <person name="Tin-Wollam A.-M."/>
            <person name="Maupin R."/>
            <person name="Latreille P."/>
            <person name="Wendl M.C."/>
            <person name="Yang S.-P."/>
            <person name="Pohl C."/>
            <person name="Wallis J.W."/>
            <person name="Spieth J."/>
            <person name="Bieri T.A."/>
            <person name="Berkowicz N."/>
            <person name="Nelson J.O."/>
            <person name="Osborne J."/>
            <person name="Ding L."/>
            <person name="Meyer R."/>
            <person name="Sabo A."/>
            <person name="Shotland Y."/>
            <person name="Sinha P."/>
            <person name="Wohldmann P.E."/>
            <person name="Cook L.L."/>
            <person name="Hickenbotham M.T."/>
            <person name="Eldred J."/>
            <person name="Williams D."/>
            <person name="Jones T.A."/>
            <person name="She X."/>
            <person name="Ciccarelli F.D."/>
            <person name="Izaurralde E."/>
            <person name="Taylor J."/>
            <person name="Schmutz J."/>
            <person name="Myers R.M."/>
            <person name="Cox D.R."/>
            <person name="Huang X."/>
            <person name="McPherson J.D."/>
            <person name="Mardis E.R."/>
            <person name="Clifton S.W."/>
            <person name="Warren W.C."/>
            <person name="Chinwalla A.T."/>
            <person name="Eddy S.R."/>
            <person name="Marra M.A."/>
            <person name="Ovcharenko I."/>
            <person name="Furey T.S."/>
            <person name="Miller W."/>
            <person name="Eichler E.E."/>
            <person name="Bork P."/>
            <person name="Suyama M."/>
            <person name="Torrents D."/>
            <person name="Waterston R.H."/>
            <person name="Wilson R.K."/>
        </authorList>
    </citation>
    <scope>NUCLEOTIDE SEQUENCE [LARGE SCALE GENOMIC DNA]</scope>
</reference>
<reference key="5">
    <citation type="submission" date="2005-09" db="EMBL/GenBank/DDBJ databases">
        <authorList>
            <person name="Mural R.J."/>
            <person name="Istrail S."/>
            <person name="Sutton G.G."/>
            <person name="Florea L."/>
            <person name="Halpern A.L."/>
            <person name="Mobarry C.M."/>
            <person name="Lippert R."/>
            <person name="Walenz B."/>
            <person name="Shatkay H."/>
            <person name="Dew I."/>
            <person name="Miller J.R."/>
            <person name="Flanigan M.J."/>
            <person name="Edwards N.J."/>
            <person name="Bolanos R."/>
            <person name="Fasulo D."/>
            <person name="Halldorsson B.V."/>
            <person name="Hannenhalli S."/>
            <person name="Turner R."/>
            <person name="Yooseph S."/>
            <person name="Lu F."/>
            <person name="Nusskern D.R."/>
            <person name="Shue B.C."/>
            <person name="Zheng X.H."/>
            <person name="Zhong F."/>
            <person name="Delcher A.L."/>
            <person name="Huson D.H."/>
            <person name="Kravitz S.A."/>
            <person name="Mouchard L."/>
            <person name="Reinert K."/>
            <person name="Remington K.A."/>
            <person name="Clark A.G."/>
            <person name="Waterman M.S."/>
            <person name="Eichler E.E."/>
            <person name="Adams M.D."/>
            <person name="Hunkapiller M.W."/>
            <person name="Myers E.W."/>
            <person name="Venter J.C."/>
        </authorList>
    </citation>
    <scope>NUCLEOTIDE SEQUENCE [LARGE SCALE GENOMIC DNA]</scope>
</reference>
<reference key="6">
    <citation type="journal article" date="2004" name="Genome Res.">
        <title>The status, quality, and expansion of the NIH full-length cDNA project: the Mammalian Gene Collection (MGC).</title>
        <authorList>
            <consortium name="The MGC Project Team"/>
        </authorList>
    </citation>
    <scope>NUCLEOTIDE SEQUENCE [LARGE SCALE MRNA] (ISOFORMS 3 AND 5)</scope>
    <scope>VARIANTS ARG-555; ILE-559 AND TYR-658</scope>
    <source>
        <tissue>PNS</tissue>
    </source>
</reference>
<name>VITRN_HUMAN</name>
<sequence length="678" mass="73930">MRTVVLTMKASVIEMFLVLLVTGVHSNKETAKKIKRPKFTVPQINCDVKAGKIIDPEFIVKCPAGCQDPKYHVYGTDVYASYSSVCGAAVHSGVLDNSGGKILVRKVAGQSGYKGSYSNGVQSLSLPRWRESFIVLESKPKKGVTYPSALTYSSSKSPAAQAGETTKAYQRPPIPGTTAQPVTLMQLLAVTVAVATPTTLPRPSPSAASTTSIPRPQSVGHRSQEMDLWSTATYTSSQNRPRADPGIQRQDPSGAAFQKPVGADVSLGLVPKEELSTQSLEPVSLGDPNCKIDLSFLIDGSTSIGKRRFRIQKQLLADVAQALDIGPAGPLMGVVQYGDNPATHFNLKTHTNSRDLKTAIEKITQRGGLSNVGRAISFVTKNFFSKANGNRSGAPNVVVVMVDGWPTDKVEEASRLARESGINIFFITIEGAAENEKQYVVEPNFANKAVCRTNGFYSLHVQSWFGLHKTLQPLVKRVCDTDRLACSKTCLNSADIGFVIDGSSSVGTGNFRTVLQFVTNLTKEFEISDTDTRIGAVQYTYEQRLEFGFDKYSSKPDILNAIKRVGYWSGGTSTGAAINFALEQLFKKSKPNKRKLMILITDGRSYDDVRIPAMAAHLKGVITYAIGVAWAAQEELEVIATHPARDHSFFVDEFDNLHQYVPRIIQNICTEFNSQPRN</sequence>
<proteinExistence type="evidence at protein level"/>
<feature type="signal peptide" evidence="3">
    <location>
        <begin position="1"/>
        <end position="26"/>
    </location>
</feature>
<feature type="chain" id="PRO_0000248210" description="Vitrin">
    <location>
        <begin position="27"/>
        <end position="678"/>
    </location>
</feature>
<feature type="domain" description="LCCL" evidence="4">
    <location>
        <begin position="40"/>
        <end position="133"/>
    </location>
</feature>
<feature type="domain" description="VWFA 1" evidence="5">
    <location>
        <begin position="293"/>
        <end position="478"/>
    </location>
</feature>
<feature type="domain" description="VWFA 2" evidence="5">
    <location>
        <begin position="495"/>
        <end position="668"/>
    </location>
</feature>
<feature type="region of interest" description="Disordered" evidence="6">
    <location>
        <begin position="154"/>
        <end position="177"/>
    </location>
</feature>
<feature type="region of interest" description="Disordered" evidence="6">
    <location>
        <begin position="199"/>
        <end position="257"/>
    </location>
</feature>
<feature type="compositionally biased region" description="Polar residues" evidence="6">
    <location>
        <begin position="154"/>
        <end position="168"/>
    </location>
</feature>
<feature type="compositionally biased region" description="Low complexity" evidence="6">
    <location>
        <begin position="199"/>
        <end position="216"/>
    </location>
</feature>
<feature type="compositionally biased region" description="Polar residues" evidence="6">
    <location>
        <begin position="230"/>
        <end position="240"/>
    </location>
</feature>
<feature type="glycosylation site" description="N-linked (GlcNAc...) asparagine" evidence="3">
    <location>
        <position position="390"/>
    </location>
</feature>
<feature type="glycosylation site" description="N-linked (GlcNAc...) asparagine" evidence="3">
    <location>
        <position position="520"/>
    </location>
</feature>
<feature type="disulfide bond" evidence="4">
    <location>
        <begin position="46"/>
        <end position="62"/>
    </location>
</feature>
<feature type="disulfide bond" evidence="4">
    <location>
        <begin position="66"/>
        <end position="86"/>
    </location>
</feature>
<feature type="splice variant" id="VSP_020209" description="In isoform 3." evidence="9 10">
    <original>ETTKAYQRPPIPGTTAQPVTLMQLLAVTVAVATPTTLPRP</original>
    <variation>KCSRVIESKPSESMNTRRVLGDSGEINILTGQAPLALAIF</variation>
    <location>
        <begin position="164"/>
        <end position="203"/>
    </location>
</feature>
<feature type="splice variant" id="VSP_020210" description="In isoform 3." evidence="9 10">
    <location>
        <begin position="204"/>
        <end position="678"/>
    </location>
</feature>
<feature type="splice variant" id="VSP_020211" description="In isoform 2." evidence="8">
    <location>
        <begin position="247"/>
        <end position="268"/>
    </location>
</feature>
<feature type="splice variant" id="VSP_040124" description="In isoform 4." evidence="9">
    <original>L</original>
    <variation>LGEMDSWKPGSVLLDE</variation>
    <location>
        <position position="267"/>
    </location>
</feature>
<feature type="splice variant" id="VSP_044597" description="In isoform 5." evidence="10">
    <original>GLVPKEELSTQSLEPVSLGDPN</original>
    <variation>D</variation>
    <location>
        <begin position="268"/>
        <end position="289"/>
    </location>
</feature>
<feature type="sequence variant" id="VAR_068964" description="In dbSNP:rs2072526." evidence="7">
    <original>K</original>
    <variation>R</variation>
    <location>
        <position position="555"/>
    </location>
</feature>
<feature type="sequence variant" id="VAR_068965" description="In dbSNP:rs2072525." evidence="7">
    <original>L</original>
    <variation>I</variation>
    <location>
        <position position="559"/>
    </location>
</feature>
<feature type="sequence variant" id="VAR_068966" description="In dbSNP:rs11901202." evidence="7">
    <original>H</original>
    <variation>Y</variation>
    <location>
        <position position="658"/>
    </location>
</feature>
<feature type="sequence conflict" description="In Ref. 1; AAL18263." evidence="11" ref="1">
    <original>A</original>
    <variation>T</variation>
    <location>
        <position position="80"/>
    </location>
</feature>
<feature type="sequence conflict" description="In Ref. 1; AAL18263." evidence="11" ref="1">
    <original>G</original>
    <variation>S</variation>
    <location>
        <position position="93"/>
    </location>
</feature>
<feature type="sequence conflict" description="In Ref. 1; AAL18263." evidence="11" ref="1">
    <original>N</original>
    <variation>D</variation>
    <location>
        <position position="97"/>
    </location>
</feature>
<feature type="sequence conflict" description="In Ref. 1; AAL18263." evidence="11" ref="1">
    <original>A</original>
    <variation>T</variation>
    <location>
        <position position="375"/>
    </location>
</feature>
<feature type="sequence conflict" description="In Ref. 1; AAL18263." evidence="11" ref="1">
    <original>E</original>
    <variation>V</variation>
    <location>
        <position position="419"/>
    </location>
</feature>
<accession>Q6UXI7</accession>
<accession>A1A526</accession>
<accession>A6NKI9</accession>
<accession>A8K7Y4</accession>
<accession>E9PF47</accession>
<accession>Q6P7T3</accession>
<accession>Q96DM8</accession>
<accession>Q96DT1</accession>
<accession>Q9UDN0</accession>
<protein>
    <recommendedName>
        <fullName>Vitrin</fullName>
    </recommendedName>
</protein>
<organism>
    <name type="scientific">Homo sapiens</name>
    <name type="common">Human</name>
    <dbReference type="NCBI Taxonomy" id="9606"/>
    <lineage>
        <taxon>Eukaryota</taxon>
        <taxon>Metazoa</taxon>
        <taxon>Chordata</taxon>
        <taxon>Craniata</taxon>
        <taxon>Vertebrata</taxon>
        <taxon>Euteleostomi</taxon>
        <taxon>Mammalia</taxon>
        <taxon>Eutheria</taxon>
        <taxon>Euarchontoglires</taxon>
        <taxon>Primates</taxon>
        <taxon>Haplorrhini</taxon>
        <taxon>Catarrhini</taxon>
        <taxon>Hominidae</taxon>
        <taxon>Homo</taxon>
    </lineage>
</organism>
<comment type="function">
    <text evidence="2">Promotes matrix assembly and cell adhesiveness. Plays a role in spinal cord formation by regulating the proliferation and differentiation of neural stem cells.</text>
</comment>
<comment type="subunit">
    <text evidence="1">Binds dermatan sulfate and chondroitin sulfate.</text>
</comment>
<comment type="subcellular location">
    <subcellularLocation>
        <location evidence="1">Secreted</location>
        <location evidence="1">Extracellular space</location>
        <location evidence="1">Extracellular matrix</location>
    </subcellularLocation>
</comment>
<comment type="alternative products">
    <event type="alternative splicing"/>
    <isoform>
        <id>Q6UXI7-1</id>
        <name>1</name>
        <sequence type="displayed"/>
    </isoform>
    <isoform>
        <id>Q6UXI7-2</id>
        <name>2</name>
        <sequence type="described" ref="VSP_020211"/>
    </isoform>
    <isoform>
        <id>Q6UXI7-3</id>
        <name>3</name>
        <sequence type="described" ref="VSP_020209 VSP_020210"/>
    </isoform>
    <isoform>
        <id>Q6UXI7-4</id>
        <name>4</name>
        <sequence type="described" ref="VSP_040124"/>
    </isoform>
    <isoform>
        <id>Q6UXI7-5</id>
        <name>5</name>
        <sequence type="described" ref="VSP_044597"/>
    </isoform>
</comment>
<gene>
    <name type="primary">VIT</name>
    <name type="ORF">UNQ647/PRO1277</name>
</gene>